<feature type="chain" id="PRO_0000172055" description="Putative pre-16S rRNA nuclease">
    <location>
        <begin position="1"/>
        <end position="141"/>
    </location>
</feature>
<reference key="1">
    <citation type="journal article" date="2003" name="Proc. Natl. Acad. Sci. U.S.A.">
        <title>Complete genome sequence of the Q-fever pathogen, Coxiella burnetii.</title>
        <authorList>
            <person name="Seshadri R."/>
            <person name="Paulsen I.T."/>
            <person name="Eisen J.A."/>
            <person name="Read T.D."/>
            <person name="Nelson K.E."/>
            <person name="Nelson W.C."/>
            <person name="Ward N.L."/>
            <person name="Tettelin H."/>
            <person name="Davidsen T.M."/>
            <person name="Beanan M.J."/>
            <person name="DeBoy R.T."/>
            <person name="Daugherty S.C."/>
            <person name="Brinkac L.M."/>
            <person name="Madupu R."/>
            <person name="Dodson R.J."/>
            <person name="Khouri H.M."/>
            <person name="Lee K.H."/>
            <person name="Carty H.A."/>
            <person name="Scanlan D."/>
            <person name="Heinzen R.A."/>
            <person name="Thompson H.A."/>
            <person name="Samuel J.E."/>
            <person name="Fraser C.M."/>
            <person name="Heidelberg J.F."/>
        </authorList>
    </citation>
    <scope>NUCLEOTIDE SEQUENCE [LARGE SCALE GENOMIC DNA]</scope>
    <source>
        <strain>RSA 493 / Nine Mile phase I</strain>
    </source>
</reference>
<protein>
    <recommendedName>
        <fullName evidence="1">Putative pre-16S rRNA nuclease</fullName>
        <ecNumber evidence="1">3.1.-.-</ecNumber>
    </recommendedName>
</protein>
<gene>
    <name type="ordered locus">CBU_2094</name>
</gene>
<keyword id="KW-0963">Cytoplasm</keyword>
<keyword id="KW-0378">Hydrolase</keyword>
<keyword id="KW-0540">Nuclease</keyword>
<keyword id="KW-1185">Reference proteome</keyword>
<keyword id="KW-0690">Ribosome biogenesis</keyword>
<proteinExistence type="inferred from homology"/>
<accession>Q83A17</accession>
<sequence length="141" mass="16111">MPNQNLIALGFDFGMKRIGVAVGQTVTHSANAIAILKAQDGVPDWEKIKMLIETWHANVLVVGIPYNMDGSEQTLTFAARKFARKLQMRFGLPVSMVDERLTTIEAKRQWYEQGLTKRPQHLDNYAAKLILEQWLQEQKNE</sequence>
<comment type="function">
    <text evidence="1">Could be a nuclease involved in processing of the 5'-end of pre-16S rRNA.</text>
</comment>
<comment type="subcellular location">
    <subcellularLocation>
        <location evidence="1">Cytoplasm</location>
    </subcellularLocation>
</comment>
<comment type="similarity">
    <text evidence="1">Belongs to the YqgF nuclease family.</text>
</comment>
<dbReference type="EC" id="3.1.-.-" evidence="1"/>
<dbReference type="EMBL" id="AE016828">
    <property type="protein sequence ID" value="AAO91578.2"/>
    <property type="molecule type" value="Genomic_DNA"/>
</dbReference>
<dbReference type="RefSeq" id="NP_821064.2">
    <property type="nucleotide sequence ID" value="NC_002971.4"/>
</dbReference>
<dbReference type="SMR" id="Q83A17"/>
<dbReference type="STRING" id="227377.CBU_2094"/>
<dbReference type="EnsemblBacteria" id="AAO91578">
    <property type="protein sequence ID" value="AAO91578"/>
    <property type="gene ID" value="CBU_2094"/>
</dbReference>
<dbReference type="GeneID" id="1210007"/>
<dbReference type="KEGG" id="cbu:CBU_2094"/>
<dbReference type="PATRIC" id="fig|227377.7.peg.2085"/>
<dbReference type="eggNOG" id="COG0816">
    <property type="taxonomic scope" value="Bacteria"/>
</dbReference>
<dbReference type="HOGENOM" id="CLU_098240_3_0_6"/>
<dbReference type="OrthoDB" id="9796140at2"/>
<dbReference type="Proteomes" id="UP000002671">
    <property type="component" value="Chromosome"/>
</dbReference>
<dbReference type="GO" id="GO:0005737">
    <property type="term" value="C:cytoplasm"/>
    <property type="evidence" value="ECO:0007669"/>
    <property type="project" value="UniProtKB-SubCell"/>
</dbReference>
<dbReference type="GO" id="GO:0004518">
    <property type="term" value="F:nuclease activity"/>
    <property type="evidence" value="ECO:0007669"/>
    <property type="project" value="UniProtKB-KW"/>
</dbReference>
<dbReference type="GO" id="GO:0000967">
    <property type="term" value="P:rRNA 5'-end processing"/>
    <property type="evidence" value="ECO:0000318"/>
    <property type="project" value="GO_Central"/>
</dbReference>
<dbReference type="CDD" id="cd16964">
    <property type="entry name" value="YqgF"/>
    <property type="match status" value="1"/>
</dbReference>
<dbReference type="FunFam" id="3.30.420.140:FF:000022">
    <property type="entry name" value="Putative pre-16S rRNA nuclease"/>
    <property type="match status" value="1"/>
</dbReference>
<dbReference type="Gene3D" id="3.30.420.140">
    <property type="entry name" value="YqgF/RNase H-like domain"/>
    <property type="match status" value="1"/>
</dbReference>
<dbReference type="HAMAP" id="MF_00651">
    <property type="entry name" value="Nuclease_YqgF"/>
    <property type="match status" value="1"/>
</dbReference>
<dbReference type="InterPro" id="IPR012337">
    <property type="entry name" value="RNaseH-like_sf"/>
</dbReference>
<dbReference type="InterPro" id="IPR005227">
    <property type="entry name" value="YqgF"/>
</dbReference>
<dbReference type="InterPro" id="IPR006641">
    <property type="entry name" value="YqgF/RNaseH-like_dom"/>
</dbReference>
<dbReference type="InterPro" id="IPR037027">
    <property type="entry name" value="YqgF/RNaseH-like_dom_sf"/>
</dbReference>
<dbReference type="NCBIfam" id="TIGR00250">
    <property type="entry name" value="RNAse_H_YqgF"/>
    <property type="match status" value="1"/>
</dbReference>
<dbReference type="PANTHER" id="PTHR33317">
    <property type="entry name" value="POLYNUCLEOTIDYL TRANSFERASE, RIBONUCLEASE H-LIKE SUPERFAMILY PROTEIN"/>
    <property type="match status" value="1"/>
</dbReference>
<dbReference type="PANTHER" id="PTHR33317:SF4">
    <property type="entry name" value="POLYNUCLEOTIDYL TRANSFERASE, RIBONUCLEASE H-LIKE SUPERFAMILY PROTEIN"/>
    <property type="match status" value="1"/>
</dbReference>
<dbReference type="Pfam" id="PF03652">
    <property type="entry name" value="RuvX"/>
    <property type="match status" value="1"/>
</dbReference>
<dbReference type="SMART" id="SM00732">
    <property type="entry name" value="YqgFc"/>
    <property type="match status" value="1"/>
</dbReference>
<dbReference type="SUPFAM" id="SSF53098">
    <property type="entry name" value="Ribonuclease H-like"/>
    <property type="match status" value="1"/>
</dbReference>
<organism>
    <name type="scientific">Coxiella burnetii (strain RSA 493 / Nine Mile phase I)</name>
    <dbReference type="NCBI Taxonomy" id="227377"/>
    <lineage>
        <taxon>Bacteria</taxon>
        <taxon>Pseudomonadati</taxon>
        <taxon>Pseudomonadota</taxon>
        <taxon>Gammaproteobacteria</taxon>
        <taxon>Legionellales</taxon>
        <taxon>Coxiellaceae</taxon>
        <taxon>Coxiella</taxon>
    </lineage>
</organism>
<evidence type="ECO:0000255" key="1">
    <source>
        <dbReference type="HAMAP-Rule" id="MF_00651"/>
    </source>
</evidence>
<name>YQGF_COXBU</name>